<feature type="chain" id="PRO_0000407220" description="Dynamin-like protein ARC5">
    <location>
        <begin position="1"/>
        <end position="777"/>
    </location>
</feature>
<feature type="domain" description="Dynamin-type G" evidence="2">
    <location>
        <begin position="45"/>
        <end position="343"/>
    </location>
</feature>
<feature type="region of interest" description="G1 motif" evidence="2">
    <location>
        <begin position="55"/>
        <end position="62"/>
    </location>
</feature>
<feature type="region of interest" description="G2 motif" evidence="2">
    <location>
        <begin position="81"/>
        <end position="83"/>
    </location>
</feature>
<feature type="region of interest" description="G3 motif" evidence="2">
    <location>
        <begin position="160"/>
        <end position="163"/>
    </location>
</feature>
<feature type="region of interest" description="G4 motif" evidence="2">
    <location>
        <begin position="231"/>
        <end position="234"/>
    </location>
</feature>
<feature type="region of interest" description="G5 motif" evidence="2">
    <location>
        <begin position="265"/>
        <end position="268"/>
    </location>
</feature>
<feature type="coiled-coil region" evidence="1">
    <location>
        <begin position="300"/>
        <end position="320"/>
    </location>
</feature>
<feature type="coiled-coil region" evidence="1">
    <location>
        <begin position="728"/>
        <end position="765"/>
    </location>
</feature>
<feature type="binding site" evidence="1">
    <location>
        <begin position="55"/>
        <end position="62"/>
    </location>
    <ligand>
        <name>GTP</name>
        <dbReference type="ChEBI" id="CHEBI:37565"/>
    </ligand>
</feature>
<feature type="binding site" evidence="1">
    <location>
        <begin position="160"/>
        <end position="164"/>
    </location>
    <ligand>
        <name>GTP</name>
        <dbReference type="ChEBI" id="CHEBI:37565"/>
    </ligand>
</feature>
<feature type="binding site" evidence="1">
    <location>
        <begin position="231"/>
        <end position="234"/>
    </location>
    <ligand>
        <name>GTP</name>
        <dbReference type="ChEBI" id="CHEBI:37565"/>
    </ligand>
</feature>
<feature type="splice variant" id="VSP_040936" description="In isoform 2." evidence="17">
    <location>
        <begin position="601"/>
        <end position="636"/>
    </location>
</feature>
<feature type="mutagenesis site" description="Reduced GTPase activity but normal localization at the constriction site of dividing chloroplasts; however, reduced turnover between cytosolic and chloroplastic pools." evidence="12">
    <original>K</original>
    <variation>A</variation>
    <location>
        <position position="61"/>
    </location>
</feature>
<feature type="mutagenesis site" description="Reduced GTPase activity but normal localization at the constriction site of dividing chloroplasts; however, reduced turnover between cytosolic and chloroplastic pools." evidence="12">
    <original>T</original>
    <variation>D</variation>
    <location>
        <position position="82"/>
    </location>
</feature>
<feature type="sequence conflict" description="In Ref. 1; AAO89221." evidence="17" ref="1">
    <original>Q</original>
    <variation>H</variation>
    <location>
        <position position="121"/>
    </location>
</feature>
<feature type="sequence conflict" description="In Ref. 1; AAO89221." evidence="17" ref="1">
    <original>P</original>
    <variation>Q</variation>
    <location>
        <position position="433"/>
    </location>
</feature>
<feature type="sequence conflict" description="In Ref. 1; AAO89221." evidence="17" ref="1">
    <original>I</original>
    <variation>V</variation>
    <location>
        <position position="747"/>
    </location>
</feature>
<comment type="function">
    <text evidence="3 4 5 6 7 11 12 13">Mechanochemical GTPase component of both plastid and peroxisome division machinery (PubMed:32005784). Required for the last steps of plastid division specifically in mesophyll-cell, when the narrow isthmus breaks, facilitating the separation of the daughter plastids (PubMed:29466386). Necessary for peroxisome activities. Seems to influence stromule (stroma-filled tubular extensions of the plastid envelope membrane) length and frequency (PubMed:29466386).</text>
</comment>
<comment type="catalytic activity">
    <reaction evidence="12">
        <text>GTP + H2O = GDP + phosphate + H(+)</text>
        <dbReference type="Rhea" id="RHEA:19669"/>
        <dbReference type="ChEBI" id="CHEBI:15377"/>
        <dbReference type="ChEBI" id="CHEBI:15378"/>
        <dbReference type="ChEBI" id="CHEBI:37565"/>
        <dbReference type="ChEBI" id="CHEBI:43474"/>
        <dbReference type="ChEBI" id="CHEBI:58189"/>
        <dbReference type="EC" id="3.6.5.5"/>
    </reaction>
    <physiologicalReaction direction="right-to-left" evidence="12">
        <dbReference type="Rhea" id="RHEA:19671"/>
    </physiologicalReaction>
</comment>
<comment type="activity regulation">
    <text evidence="10 12">GTPase activity is repressed by PDV2 thus increasing stability at the plastid outer envelope membranes (OEMs) periphery.</text>
</comment>
<comment type="subunit">
    <text evidence="7 12">Forms a homodimer and heterodimers with DRP3A and DRP3B on peroxisomes. Also interacts with FIS1A (but not FIS1B) and PEX11 proteins (PEX11A, PEX11B, PEX11C, PEX11D and PEX11E) on peroxisomes. Interacts with PDV1 and PDV2 (PubMed:32005784).</text>
</comment>
<comment type="subcellular location">
    <subcellularLocation>
        <location evidence="12">Cytoplasm</location>
    </subcellularLocation>
    <subcellularLocation>
        <location evidence="9 12">Plastid</location>
        <location evidence="9 12">Chloroplast outer membrane</location>
        <topology evidence="12">Peripheral membrane protein</topology>
    </subcellularLocation>
    <subcellularLocation>
        <location evidence="7">Peroxisome</location>
    </subcellularLocation>
    <subcellularLocation>
        <location evidence="12">Cytoplasm</location>
        <location evidence="12">Cytosol</location>
    </subcellularLocation>
    <text evidence="9 12">Plastid equatorial positioning (in a discontinuous ring shape) mediated by PDV2 in complex with ARC6 and dissociation from the outer envelope membranes (OEMs) is triggered by PDV1; this localization with OEMs is repressed by phosphatidylinositol 4-phosphate (PI4P) (PubMed:25736058, PubMed:32005784). Dynamic subunit exchange within chloroplastic DRP5B rings with a cytosolic pool during chloroplast membrane constriction in a GTPase activity-dependent manner (PubMed:32005784).</text>
</comment>
<comment type="alternative products">
    <event type="alternative splicing"/>
    <isoform>
        <id>Q84N64-1</id>
        <name>1</name>
        <sequence type="displayed"/>
    </isoform>
    <isoform>
        <id>Q84N64-2</id>
        <name>2</name>
        <sequence type="described" ref="VSP_040936"/>
    </isoform>
</comment>
<comment type="induction">
    <text evidence="8">Induced by gibberellic acid (GA).</text>
</comment>
<comment type="PTM">
    <text evidence="12">Stabilized at the plastid outer envelope membranes (OEMs) in the constriction site when in complex with GTP, but destabilized after conversion of GTP into GDP leading to turnover with a cytosolic pool.</text>
</comment>
<comment type="disruption phenotype">
    <text evidence="3 4 5 6 7 11 12 13">Defects in plastid constriction leading to large and dumbbell-shaped chloroplasts in mesophyll-cell only (PubMed:29466386, PubMed:32005784). Sligthly larger division-competent chloroplasts in leaf epidermal pavement cells (PCs) with normal shapes (PubMed:29466386). A few stomatal guard cells (GCs) are missing chlorophyll-bearing plastids (chloroplasts) while accumulating minute chlorophyll-less plastids (PubMed:29466386). Reduced number of large chloroplasts in green tissues. Mostly normal vascular and epidermal chloroplasts and normal plastid size in non green tissues, sometimes exhibiting alteration in stromule length and frequency (e.g. increase in the frequency of stromules in cells of stamen filaments). Presence of highly clustered peroxisomes unable to complete fission and/or enlarged peroxisomes. Impaired peroxisome-related functions, such as photorespiration and fatty acid beta-oxidation.</text>
</comment>
<comment type="similarity">
    <text evidence="2">Belongs to the TRAFAC class dynamin-like GTPase superfamily. Dynamin/Fzo/YdjA family.</text>
</comment>
<comment type="sequence caution" evidence="17">
    <conflict type="erroneous gene model prediction">
        <sequence resource="EMBL-CDS" id="BAB02559"/>
    </conflict>
</comment>
<gene>
    <name evidence="14" type="primary">ARC5</name>
    <name evidence="15" type="synonym">DRP5B</name>
    <name evidence="18" type="ordered locus">At3g19720</name>
    <name evidence="19" type="ORF">MMB12.21</name>
</gene>
<protein>
    <recommendedName>
        <fullName evidence="14">Dynamin-like protein ARC5</fullName>
        <ecNumber evidence="12">3.6.5.5</ecNumber>
    </recommendedName>
    <alternativeName>
        <fullName evidence="15">Dynamin-related protein 5B</fullName>
    </alternativeName>
    <alternativeName>
        <fullName evidence="14">Protein ACCUMULATION AND REPLICATION OF CHLOROPLASTS 5</fullName>
        <shortName evidence="16">AtARC5</shortName>
    </alternativeName>
</protein>
<sequence length="777" mass="87171">MAEVSAKSVTVEEMAEEDDAAIEERWSLYEAYNELHALAQELETPFEAPAVLVVGQQTDGKSALVEALMGFQFNHVGGGTKTRRPITLHMKYDPQCQFPLCHLGSDDDPSVSLPKSLSQIQAYIEAENMRLEQEPCSPFSAKEIIVKVQYKYCPNLTIIDTPGLIAPAPGLKNRALQVQARAVEALVRAKMQHKEFIILCLEDSSDWSIATTRRIVMQVDPELSRTIVVSTKLDTKIPQFSCSSDVEVFLSPPASALDSSLLGDSPFFTSVPSGRVGYGQDSVYKSNDEFKQAVSLREMEDIASLEKKLGRLLTKQEKSRIGISKLRLFLEELLWKRYKESVPLIIPLLGKEYRSTVRKLDTVSKELSSLDEAKLKERGRTFHDLFLTKLSLLLKGTVVAPPDKFGETLQDERTQGGAFVGTDGLQFSHKLIPNAGMRLYGGAQYHRAMAEFRFLVGAIKCPPITREEIVNACGVEDIHDGTNYSRTACVIAVAKARETFEPFLHQLGARLLHILKRLLPISVYLLQKEGEYLSGHEVFLKRVASAFNSFVESTEKSCRDKCMEDLASTTRYVTWSLHNKNRAGLRQFLDSFGGTEHNTTSGNAIGFSLPQDALGGTTDTKSRSDVKLSHLASNIDSGSSIQTTEMRLADLLDSTLWNRKLAPSSERIVYALVQQIFQGIREYFLASAELKFNCFLLMPIVDKLPALLREELENAFEDDLDSIFDITNLRQSLDQKKRSTEIELRRIKRIKEKFRVMNEKLNSHEFAQNLKAPSVQH</sequence>
<evidence type="ECO:0000255" key="1"/>
<evidence type="ECO:0000255" key="2">
    <source>
        <dbReference type="PROSITE-ProRule" id="PRU01055"/>
    </source>
</evidence>
<evidence type="ECO:0000269" key="3">
    <source>
    </source>
</evidence>
<evidence type="ECO:0000269" key="4">
    <source>
    </source>
</evidence>
<evidence type="ECO:0000269" key="5">
    <source>
    </source>
</evidence>
<evidence type="ECO:0000269" key="6">
    <source>
    </source>
</evidence>
<evidence type="ECO:0000269" key="7">
    <source>
    </source>
</evidence>
<evidence type="ECO:0000269" key="8">
    <source>
    </source>
</evidence>
<evidence type="ECO:0000269" key="9">
    <source>
    </source>
</evidence>
<evidence type="ECO:0000269" key="10">
    <source>
    </source>
</evidence>
<evidence type="ECO:0000269" key="11">
    <source>
    </source>
</evidence>
<evidence type="ECO:0000269" key="12">
    <source>
    </source>
</evidence>
<evidence type="ECO:0000269" key="13">
    <source>
    </source>
</evidence>
<evidence type="ECO:0000303" key="14">
    <source>
    </source>
</evidence>
<evidence type="ECO:0000303" key="15">
    <source>
    </source>
</evidence>
<evidence type="ECO:0000303" key="16">
    <source>
    </source>
</evidence>
<evidence type="ECO:0000305" key="17"/>
<evidence type="ECO:0000312" key="18">
    <source>
        <dbReference type="Araport" id="AT3G19720"/>
    </source>
</evidence>
<evidence type="ECO:0000312" key="19">
    <source>
        <dbReference type="EMBL" id="BAB02559.1"/>
    </source>
</evidence>
<dbReference type="EC" id="3.6.5.5" evidence="12"/>
<dbReference type="EMBL" id="AY212885">
    <property type="protein sequence ID" value="AAO89221.1"/>
    <property type="molecule type" value="mRNA"/>
</dbReference>
<dbReference type="EMBL" id="AP000417">
    <property type="protein sequence ID" value="BAB02559.1"/>
    <property type="status" value="ALT_SEQ"/>
    <property type="molecule type" value="Genomic_DNA"/>
</dbReference>
<dbReference type="EMBL" id="CP002686">
    <property type="protein sequence ID" value="AEE76279.1"/>
    <property type="molecule type" value="Genomic_DNA"/>
</dbReference>
<dbReference type="EMBL" id="CP002686">
    <property type="protein sequence ID" value="AEE76280.1"/>
    <property type="molecule type" value="Genomic_DNA"/>
</dbReference>
<dbReference type="PIR" id="T52402">
    <property type="entry name" value="T52402"/>
</dbReference>
<dbReference type="RefSeq" id="NP_188606.2">
    <molecule id="Q84N64-1"/>
    <property type="nucleotide sequence ID" value="NM_112862.4"/>
</dbReference>
<dbReference type="RefSeq" id="NP_850615.2">
    <molecule id="Q84N64-2"/>
    <property type="nucleotide sequence ID" value="NM_180284.3"/>
</dbReference>
<dbReference type="BioGRID" id="6842">
    <property type="interactions" value="12"/>
</dbReference>
<dbReference type="FunCoup" id="Q84N64">
    <property type="interactions" value="449"/>
</dbReference>
<dbReference type="STRING" id="3702.Q84N64"/>
<dbReference type="iPTMnet" id="Q84N64"/>
<dbReference type="PaxDb" id="3702-AT3G19720.1"/>
<dbReference type="ProteomicsDB" id="244427">
    <molecule id="Q84N64-1"/>
</dbReference>
<dbReference type="EnsemblPlants" id="AT3G19720.1">
    <molecule id="Q84N64-1"/>
    <property type="protein sequence ID" value="AT3G19720.1"/>
    <property type="gene ID" value="AT3G19720"/>
</dbReference>
<dbReference type="EnsemblPlants" id="AT3G19720.2">
    <molecule id="Q84N64-2"/>
    <property type="protein sequence ID" value="AT3G19720.2"/>
    <property type="gene ID" value="AT3G19720"/>
</dbReference>
<dbReference type="GeneID" id="821509"/>
<dbReference type="Gramene" id="AT3G19720.1">
    <molecule id="Q84N64-1"/>
    <property type="protein sequence ID" value="AT3G19720.1"/>
    <property type="gene ID" value="AT3G19720"/>
</dbReference>
<dbReference type="Gramene" id="AT3G19720.2">
    <molecule id="Q84N64-2"/>
    <property type="protein sequence ID" value="AT3G19720.2"/>
    <property type="gene ID" value="AT3G19720"/>
</dbReference>
<dbReference type="KEGG" id="ath:AT3G19720"/>
<dbReference type="Araport" id="AT3G19720"/>
<dbReference type="TAIR" id="AT3G19720">
    <property type="gene designation" value="ARC5"/>
</dbReference>
<dbReference type="eggNOG" id="KOG0446">
    <property type="taxonomic scope" value="Eukaryota"/>
</dbReference>
<dbReference type="InParanoid" id="Q84N64"/>
<dbReference type="OMA" id="IAINMKY"/>
<dbReference type="OrthoDB" id="5061070at2759"/>
<dbReference type="PhylomeDB" id="Q84N64"/>
<dbReference type="PRO" id="PR:Q84N64"/>
<dbReference type="Proteomes" id="UP000006548">
    <property type="component" value="Chromosome 3"/>
</dbReference>
<dbReference type="ExpressionAtlas" id="Q84N64">
    <property type="expression patterns" value="baseline and differential"/>
</dbReference>
<dbReference type="GO" id="GO:0009507">
    <property type="term" value="C:chloroplast"/>
    <property type="evidence" value="ECO:0000314"/>
    <property type="project" value="TAIR"/>
</dbReference>
<dbReference type="GO" id="GO:0009707">
    <property type="term" value="C:chloroplast outer membrane"/>
    <property type="evidence" value="ECO:0000314"/>
    <property type="project" value="UniProtKB"/>
</dbReference>
<dbReference type="GO" id="GO:0005829">
    <property type="term" value="C:cytosol"/>
    <property type="evidence" value="ECO:0000314"/>
    <property type="project" value="UniProtKB"/>
</dbReference>
<dbReference type="GO" id="GO:0005777">
    <property type="term" value="C:peroxisome"/>
    <property type="evidence" value="ECO:0000314"/>
    <property type="project" value="TAIR"/>
</dbReference>
<dbReference type="GO" id="GO:0005525">
    <property type="term" value="F:GTP binding"/>
    <property type="evidence" value="ECO:0007669"/>
    <property type="project" value="UniProtKB-KW"/>
</dbReference>
<dbReference type="GO" id="GO:0003924">
    <property type="term" value="F:GTPase activity"/>
    <property type="evidence" value="ECO:0000314"/>
    <property type="project" value="UniProtKB"/>
</dbReference>
<dbReference type="GO" id="GO:0042802">
    <property type="term" value="F:identical protein binding"/>
    <property type="evidence" value="ECO:0000314"/>
    <property type="project" value="UniProtKB"/>
</dbReference>
<dbReference type="GO" id="GO:0010020">
    <property type="term" value="P:chloroplast fission"/>
    <property type="evidence" value="ECO:0000315"/>
    <property type="project" value="UniProtKB"/>
</dbReference>
<dbReference type="GO" id="GO:0007623">
    <property type="term" value="P:circadian rhythm"/>
    <property type="evidence" value="ECO:0000270"/>
    <property type="project" value="TAIR"/>
</dbReference>
<dbReference type="GO" id="GO:0016559">
    <property type="term" value="P:peroxisome fission"/>
    <property type="evidence" value="ECO:0000315"/>
    <property type="project" value="TAIR"/>
</dbReference>
<dbReference type="GO" id="GO:0009739">
    <property type="term" value="P:response to gibberellin"/>
    <property type="evidence" value="ECO:0000270"/>
    <property type="project" value="UniProtKB"/>
</dbReference>
<dbReference type="CDD" id="cd08771">
    <property type="entry name" value="DLP_1"/>
    <property type="match status" value="1"/>
</dbReference>
<dbReference type="FunFam" id="3.40.50.300:FF:001281">
    <property type="entry name" value="Dynamin-like protein ARC5"/>
    <property type="match status" value="1"/>
</dbReference>
<dbReference type="Gene3D" id="3.40.50.300">
    <property type="entry name" value="P-loop containing nucleotide triphosphate hydrolases"/>
    <property type="match status" value="1"/>
</dbReference>
<dbReference type="InterPro" id="IPR022812">
    <property type="entry name" value="Dynamin"/>
</dbReference>
<dbReference type="InterPro" id="IPR001401">
    <property type="entry name" value="Dynamin_GTPase"/>
</dbReference>
<dbReference type="InterPro" id="IPR045063">
    <property type="entry name" value="Dynamin_N"/>
</dbReference>
<dbReference type="InterPro" id="IPR030381">
    <property type="entry name" value="G_DYNAMIN_dom"/>
</dbReference>
<dbReference type="InterPro" id="IPR027417">
    <property type="entry name" value="P-loop_NTPase"/>
</dbReference>
<dbReference type="PANTHER" id="PTHR11566">
    <property type="entry name" value="DYNAMIN"/>
    <property type="match status" value="1"/>
</dbReference>
<dbReference type="PANTHER" id="PTHR11566:SF78">
    <property type="entry name" value="DYNAMIN-LIKE PROTEIN ARC5"/>
    <property type="match status" value="1"/>
</dbReference>
<dbReference type="Pfam" id="PF00350">
    <property type="entry name" value="Dynamin_N"/>
    <property type="match status" value="1"/>
</dbReference>
<dbReference type="PRINTS" id="PR00195">
    <property type="entry name" value="DYNAMIN"/>
</dbReference>
<dbReference type="SMART" id="SM00053">
    <property type="entry name" value="DYNc"/>
    <property type="match status" value="1"/>
</dbReference>
<dbReference type="SUPFAM" id="SSF52540">
    <property type="entry name" value="P-loop containing nucleoside triphosphate hydrolases"/>
    <property type="match status" value="1"/>
</dbReference>
<dbReference type="PROSITE" id="PS51718">
    <property type="entry name" value="G_DYNAMIN_2"/>
    <property type="match status" value="1"/>
</dbReference>
<organism>
    <name type="scientific">Arabidopsis thaliana</name>
    <name type="common">Mouse-ear cress</name>
    <dbReference type="NCBI Taxonomy" id="3702"/>
    <lineage>
        <taxon>Eukaryota</taxon>
        <taxon>Viridiplantae</taxon>
        <taxon>Streptophyta</taxon>
        <taxon>Embryophyta</taxon>
        <taxon>Tracheophyta</taxon>
        <taxon>Spermatophyta</taxon>
        <taxon>Magnoliopsida</taxon>
        <taxon>eudicotyledons</taxon>
        <taxon>Gunneridae</taxon>
        <taxon>Pentapetalae</taxon>
        <taxon>rosids</taxon>
        <taxon>malvids</taxon>
        <taxon>Brassicales</taxon>
        <taxon>Brassicaceae</taxon>
        <taxon>Camelineae</taxon>
        <taxon>Arabidopsis</taxon>
    </lineage>
</organism>
<accession>Q84N64</accession>
<accession>Q3EB39</accession>
<accession>Q9LJM3</accession>
<name>ARC5_ARATH</name>
<reference key="1">
    <citation type="journal article" date="2003" name="Proc. Natl. Acad. Sci. U.S.A.">
        <title>ARC5, a cytosolic dynamin-like protein from plants, is part of the chloroplast division machinery.</title>
        <authorList>
            <person name="Gao H."/>
            <person name="Kadirjan-Kalbach D."/>
            <person name="Froehlich J.E."/>
            <person name="Osteryoung K.W."/>
        </authorList>
    </citation>
    <scope>NUCLEOTIDE SEQUENCE [MRNA] (ISOFORM 1)</scope>
    <scope>FUNCTION</scope>
    <scope>DISRUPTION PHENOTYPE</scope>
    <scope>SUBCELLULAR LOCATION</scope>
    <source>
        <strain>cv. Columbia</strain>
        <strain>cv. Landsberg erecta</strain>
    </source>
</reference>
<reference key="2">
    <citation type="journal article" date="2000" name="DNA Res.">
        <title>Structural analysis of Arabidopsis thaliana chromosome 3. II. Sequence features of the 4,251,695 bp regions covered by 90 P1, TAC and BAC clones.</title>
        <authorList>
            <person name="Kaneko T."/>
            <person name="Katoh T."/>
            <person name="Sato S."/>
            <person name="Nakamura Y."/>
            <person name="Asamizu E."/>
            <person name="Tabata S."/>
        </authorList>
    </citation>
    <scope>NUCLEOTIDE SEQUENCE [LARGE SCALE GENOMIC DNA]</scope>
    <source>
        <strain>cv. Columbia</strain>
    </source>
</reference>
<reference key="3">
    <citation type="journal article" date="2017" name="Plant J.">
        <title>Araport11: a complete reannotation of the Arabidopsis thaliana reference genome.</title>
        <authorList>
            <person name="Cheng C.Y."/>
            <person name="Krishnakumar V."/>
            <person name="Chan A.P."/>
            <person name="Thibaud-Nissen F."/>
            <person name="Schobel S."/>
            <person name="Town C.D."/>
        </authorList>
    </citation>
    <scope>GENOME REANNOTATION</scope>
    <source>
        <strain>cv. Columbia</strain>
    </source>
</reference>
<reference key="4">
    <citation type="journal article" date="1994" name="Plant Physiol.">
        <title>A genetic analysis of chloroplast division and expansion in Arabidopsis thaliana.</title>
        <authorList>
            <person name="Pyke K.A."/>
            <person name="Leech R.M."/>
        </authorList>
    </citation>
    <scope>FUNCTION</scope>
    <scope>DISRUPTION PHENOTYPE</scope>
    <source>
        <strain>cv. Landsberg erecta</strain>
    </source>
</reference>
<reference key="5">
    <citation type="journal article" date="1996" name="Plant Physiol.">
        <title>Characterization of chloroplast division using the Arabidopsis mutant arc5.</title>
        <authorList>
            <person name="Robertson E.J."/>
            <person name="Rutherford S.M."/>
            <person name="Leech R.M."/>
        </authorList>
    </citation>
    <scope>FUNCTION</scope>
    <scope>DISRUPTION PHENOTYPE</scope>
    <source>
        <strain>cv. Landsberg erecta</strain>
    </source>
</reference>
<reference key="6">
    <citation type="journal article" date="1999" name="Plant J.">
        <title>The distinctive roles of five different ARC genes in the chloroplast division process in Arabidopsis.</title>
        <authorList>
            <person name="Marrison J.L."/>
            <person name="Rutherford S.M."/>
            <person name="Robertson E.J."/>
            <person name="Lister C."/>
            <person name="Dean C."/>
            <person name="Leech R.M."/>
        </authorList>
    </citation>
    <scope>FUNCTION</scope>
    <scope>DISRUPTION PHENOTYPE</scope>
</reference>
<reference key="7">
    <citation type="journal article" date="2006" name="Plant Cell">
        <title>PDV1 and PDV2 mediate recruitment of the dynamin-related protein ARC5 to the plastid division site.</title>
        <authorList>
            <person name="Miyagishima S.-Y."/>
            <person name="Froehlich J.E."/>
            <person name="Osteryoung K.W."/>
        </authorList>
    </citation>
    <scope>SUBCELLULAR LOCATION</scope>
</reference>
<reference key="8">
    <citation type="journal article" date="2008" name="Photochem. Photobiol.">
        <title>Effects of arc3, arc5 and arc6 mutations on plastid morphology and stromule formation in green and nongreen tissues of Arabidopsis thaliana.</title>
        <authorList>
            <person name="Holzinger A."/>
            <person name="Kwok E.Y."/>
            <person name="Hanson M.R."/>
        </authorList>
    </citation>
    <scope>FUNCTION</scope>
    <scope>DISRUPTION PHENOTYPE</scope>
    <source>
        <strain>cv. Columbia</strain>
        <strain>cv. Landsberg erecta</strain>
    </source>
</reference>
<reference key="9">
    <citation type="journal article" date="2008" name="Plant Cell">
        <title>Arabidopsis ARC6 coordinates the division machineries of the inner and outer chloroplast membranes through interaction with PDV2 in the intermembrane space.</title>
        <authorList>
            <person name="Glynn J.M."/>
            <person name="Froehlich J.E."/>
            <person name="Osteryoung K.W."/>
        </authorList>
    </citation>
    <scope>SUBCELLULAR LOCATION</scope>
    <source>
        <strain>cv. Columbia</strain>
    </source>
</reference>
<reference key="10">
    <citation type="journal article" date="2010" name="Biochem. Soc. Trans.">
        <title>Peroxisome division and proliferation in plants.</title>
        <authorList>
            <person name="Aung K."/>
            <person name="Zhang X."/>
            <person name="Hu J."/>
        </authorList>
    </citation>
    <scope>REVIEW</scope>
</reference>
<reference key="11">
    <citation type="journal article" date="2010" name="Plant Cell">
        <title>The Arabidopsis chloroplast division protein DYNAMIN-RELATED PROTEIN5B also mediates peroxisome division.</title>
        <authorList>
            <person name="Zhang X."/>
            <person name="Hu J."/>
        </authorList>
    </citation>
    <scope>FUNCTION</scope>
    <scope>DISRUPTION PHENOTYPE</scope>
    <scope>SELF-INTERACTION</scope>
    <scope>INTERACTION WITH FIS1A; DRP3A; DRP3B; PEX11A; PEX11B; PEX11C; PEX11D AND PEX11E</scope>
    <scope>SUBCELLULAR LOCATION</scope>
    <source>
        <strain>cv. Columbia</strain>
        <strain>cv. Landsberg erecta</strain>
    </source>
</reference>
<reference key="12">
    <citation type="journal article" date="2012" name="Plant J.">
        <title>Gibberellin indirectly promotes chloroplast biogenesis as a means to maintain the chloroplast population of expanded cells.</title>
        <authorList>
            <person name="Jiang X."/>
            <person name="Li H."/>
            <person name="Wang T."/>
            <person name="Peng C."/>
            <person name="Wang H."/>
            <person name="Wu H."/>
            <person name="Wang X."/>
        </authorList>
    </citation>
    <scope>INDUCTION BY GIBBERELLIC ACID</scope>
</reference>
<reference key="13">
    <citation type="journal article" date="2015" name="Plant Cell">
        <title>Phosphatidylinositol 4-phosphate negatively regulates chloroplast division in Arabidopsis.</title>
        <authorList>
            <person name="Okazaki K."/>
            <person name="Miyagishima S.-Y."/>
            <person name="Wada H."/>
        </authorList>
    </citation>
    <scope>SUBCELLULAR LOCATION</scope>
    <source>
        <strain>cv. Columbia</strain>
    </source>
</reference>
<reference key="14">
    <citation type="journal article" date="2017" name="Plant Cell Rep.">
        <title>PDV2 has a dosage effect on chloroplast division in Arabidopsis.</title>
        <authorList>
            <person name="Chang N."/>
            <person name="Sun Q."/>
            <person name="Li Y."/>
            <person name="Mu Y."/>
            <person name="Hu J."/>
            <person name="Feng Y."/>
            <person name="Liu X."/>
            <person name="Gao H."/>
        </authorList>
    </citation>
    <scope>ACTIVITY REGULATION</scope>
    <source>
        <strain>cv. Columbia</strain>
        <strain>cv. Landsberg erecta</strain>
    </source>
</reference>
<reference key="15">
    <citation type="journal article" date="2018" name="PLoS ONE">
        <title>The Arabidopsis arc5 and arc6 mutations differentially affect plastid morphology in pavement and guard cells in the leaf epidermis.</title>
        <authorList>
            <person name="Fujiwara M.T."/>
            <person name="Yasuzawa M."/>
            <person name="Kojo K.H."/>
            <person name="Niwa Y."/>
            <person name="Abe T."/>
            <person name="Yoshida S."/>
            <person name="Nakano T."/>
            <person name="Itoh R.D."/>
        </authorList>
    </citation>
    <scope>FUNCTION</scope>
    <scope>DISRUPTION PHENOTYPE</scope>
    <source>
        <strain>cv. Columbia</strain>
        <strain>cv. Landsberg erecta</strain>
        <strain>cv. Wassilewskija</strain>
    </source>
</reference>
<reference key="16">
    <citation type="journal article" date="2020" name="Plant Physiol.">
        <title>PDV1 and PDV2 differentially affect remodeling and assembly of the chloroplast DRP5B ring.</title>
        <authorList>
            <person name="Sun B."/>
            <person name="Zhang Q.-Y."/>
            <person name="Yuan H."/>
            <person name="Gao W."/>
            <person name="Han B."/>
            <person name="Zhang M."/>
        </authorList>
    </citation>
    <scope>FUNCTION</scope>
    <scope>MUTAGENESIS OF LYS-61 AND THR-82</scope>
    <scope>DISRUPTION PHENOTYPE</scope>
    <scope>CATALYTIC ACTIVITY</scope>
    <scope>SUBCELLULAR LOCATION</scope>
    <scope>PTM</scope>
    <scope>ACTIVITY REGULATION</scope>
    <scope>INTERACTION WITH PDV1 AND PDV2</scope>
    <source>
        <strain>cv. Columbia</strain>
        <strain>cv. Landsberg erecta</strain>
    </source>
</reference>
<keyword id="KW-0025">Alternative splicing</keyword>
<keyword id="KW-0150">Chloroplast</keyword>
<keyword id="KW-0175">Coiled coil</keyword>
<keyword id="KW-0963">Cytoplasm</keyword>
<keyword id="KW-0342">GTP-binding</keyword>
<keyword id="KW-0378">Hydrolase</keyword>
<keyword id="KW-0472">Membrane</keyword>
<keyword id="KW-0505">Motor protein</keyword>
<keyword id="KW-0547">Nucleotide-binding</keyword>
<keyword id="KW-0576">Peroxisome</keyword>
<keyword id="KW-0962">Peroxisome biogenesis</keyword>
<keyword id="KW-0934">Plastid</keyword>
<keyword id="KW-1002">Plastid outer membrane</keyword>
<keyword id="KW-1185">Reference proteome</keyword>
<proteinExistence type="evidence at protein level"/>